<accession>P35810</accession>
<accession>C9RKP7</accession>
<accession>D9S813</accession>
<name>GYRA_FIBSS</name>
<gene>
    <name evidence="1" type="primary">gyrA</name>
    <name type="ordered locus">Fisuc_0363</name>
    <name type="ordered locus">FSU_0778</name>
</gene>
<organism>
    <name type="scientific">Fibrobacter succinogenes (strain ATCC 19169 / S85)</name>
    <dbReference type="NCBI Taxonomy" id="59374"/>
    <lineage>
        <taxon>Bacteria</taxon>
        <taxon>Pseudomonadati</taxon>
        <taxon>Fibrobacterota</taxon>
        <taxon>Fibrobacteria</taxon>
        <taxon>Fibrobacterales</taxon>
        <taxon>Fibrobacteraceae</taxon>
        <taxon>Fibrobacter</taxon>
    </lineage>
</organism>
<reference key="1">
    <citation type="submission" date="2009-10" db="EMBL/GenBank/DDBJ databases">
        <title>Complete sequence of Fibrobacter succinogenes subsp. succinogenes S85.</title>
        <authorList>
            <consortium name="US DOE Joint Genome Institute"/>
            <person name="Lucas S."/>
            <person name="Copeland A."/>
            <person name="Lapidus A."/>
            <person name="Glavina del Rio T."/>
            <person name="Tice H."/>
            <person name="Bruce D."/>
            <person name="Goodwin L."/>
            <person name="Pitluck S."/>
            <person name="Chertkov O."/>
            <person name="Detter J.C."/>
            <person name="Han C."/>
            <person name="Tapia R."/>
            <person name="Larimer F."/>
            <person name="Land M."/>
            <person name="Hauser L."/>
            <person name="Kyrpides N."/>
            <person name="Mikhailova N."/>
            <person name="Weimer P.J."/>
            <person name="Stevenson D.M."/>
            <person name="Boyum J."/>
            <person name="Brumm P.I."/>
            <person name="Mead D."/>
        </authorList>
    </citation>
    <scope>NUCLEOTIDE SEQUENCE [LARGE SCALE GENOMIC DNA]</scope>
    <source>
        <strain>ATCC 19169 / S85</strain>
    </source>
</reference>
<reference key="2">
    <citation type="submission" date="2010-08" db="EMBL/GenBank/DDBJ databases">
        <title>Complete sequence of Fibrobacter succinogenes subsp. succinogenes S85.</title>
        <authorList>
            <person name="Durkin A.S."/>
            <person name="Nelson K.E."/>
            <person name="Morrison M."/>
            <person name="Forsberg C.W."/>
            <person name="Wilson D.B."/>
            <person name="Russell J.B."/>
            <person name="Cann I.K.O."/>
            <person name="Mackie R.I."/>
            <person name="White B.A."/>
        </authorList>
    </citation>
    <scope>NUCLEOTIDE SEQUENCE [LARGE SCALE GENOMIC DNA]</scope>
    <source>
        <strain>ATCC 19169 / S85</strain>
    </source>
</reference>
<reference key="3">
    <citation type="journal article" date="1993" name="J. Bacteriol.">
        <title>The xynC gene from Fibrobacter succinogenes S85 codes for a xylanase with two similar catalytic domains.</title>
        <authorList>
            <person name="Paradis F.W."/>
            <person name="Zhu H."/>
            <person name="Krell P.J."/>
            <person name="Phillips J.P."/>
            <person name="Forsberg C.W."/>
        </authorList>
    </citation>
    <scope>NUCLEOTIDE SEQUENCE [GENOMIC DNA] OF 709-903</scope>
</reference>
<comment type="function">
    <text evidence="1">A type II topoisomerase that negatively supercoils closed circular double-stranded (ds) DNA in an ATP-dependent manner to modulate DNA topology and maintain chromosomes in an underwound state. Negative supercoiling favors strand separation, and DNA replication, transcription, recombination and repair, all of which involve strand separation. Also able to catalyze the interconversion of other topological isomers of dsDNA rings, including catenanes and knotted rings. Type II topoisomerases break and join 2 DNA strands simultaneously in an ATP-dependent manner.</text>
</comment>
<comment type="catalytic activity">
    <reaction evidence="1">
        <text>ATP-dependent breakage, passage and rejoining of double-stranded DNA.</text>
        <dbReference type="EC" id="5.6.2.2"/>
    </reaction>
</comment>
<comment type="subunit">
    <text evidence="1">Heterotetramer, composed of two GyrA and two GyrB chains. In the heterotetramer, GyrA contains the active site tyrosine that forms a transient covalent intermediate with DNA, while GyrB binds cofactors and catalyzes ATP hydrolysis.</text>
</comment>
<comment type="subcellular location">
    <subcellularLocation>
        <location evidence="1">Cytoplasm</location>
    </subcellularLocation>
</comment>
<comment type="miscellaneous">
    <text evidence="1">Few gyrases are as efficient as E.coli at forming negative supercoils. Not all organisms have 2 type II topoisomerases; in organisms with a single type II topoisomerase this enzyme also has to decatenate newly replicated chromosomes.</text>
</comment>
<comment type="similarity">
    <text evidence="1">Belongs to the type II topoisomerase GyrA/ParC subunit family.</text>
</comment>
<comment type="sequence caution" evidence="4">
    <conflict type="erroneous initiation">
        <sequence resource="EMBL-CDS" id="ADL25539"/>
    </conflict>
    <text>Truncated N-terminus.</text>
</comment>
<keyword id="KW-0067">ATP-binding</keyword>
<keyword id="KW-0963">Cytoplasm</keyword>
<keyword id="KW-0238">DNA-binding</keyword>
<keyword id="KW-0413">Isomerase</keyword>
<keyword id="KW-0547">Nucleotide-binding</keyword>
<keyword id="KW-0799">Topoisomerase</keyword>
<feature type="chain" id="PRO_0000145234" description="DNA gyrase subunit A">
    <location>
        <begin position="1"/>
        <end position="903"/>
    </location>
</feature>
<feature type="domain" description="Topo IIA-type catalytic" evidence="2">
    <location>
        <begin position="36"/>
        <end position="499"/>
    </location>
</feature>
<feature type="region of interest" description="Disordered" evidence="3">
    <location>
        <begin position="881"/>
        <end position="903"/>
    </location>
</feature>
<feature type="short sequence motif" description="GyrA-box" evidence="1">
    <location>
        <begin position="526"/>
        <end position="532"/>
    </location>
</feature>
<feature type="compositionally biased region" description="Basic and acidic residues" evidence="3">
    <location>
        <begin position="881"/>
        <end position="895"/>
    </location>
</feature>
<feature type="active site" description="O-(5'-phospho-DNA)-tyrosine intermediate" evidence="1">
    <location>
        <position position="124"/>
    </location>
</feature>
<evidence type="ECO:0000255" key="1">
    <source>
        <dbReference type="HAMAP-Rule" id="MF_01897"/>
    </source>
</evidence>
<evidence type="ECO:0000255" key="2">
    <source>
        <dbReference type="PROSITE-ProRule" id="PRU01384"/>
    </source>
</evidence>
<evidence type="ECO:0000256" key="3">
    <source>
        <dbReference type="SAM" id="MobiDB-lite"/>
    </source>
</evidence>
<evidence type="ECO:0000305" key="4"/>
<protein>
    <recommendedName>
        <fullName evidence="1">DNA gyrase subunit A</fullName>
        <ecNumber evidence="1">5.6.2.2</ecNumber>
    </recommendedName>
</protein>
<dbReference type="EC" id="5.6.2.2" evidence="1"/>
<dbReference type="EMBL" id="CP001792">
    <property type="protein sequence ID" value="ACX73975.1"/>
    <property type="molecule type" value="Genomic_DNA"/>
</dbReference>
<dbReference type="EMBL" id="CP002158">
    <property type="protein sequence ID" value="ADL25539.1"/>
    <property type="status" value="ALT_INIT"/>
    <property type="molecule type" value="Genomic_DNA"/>
</dbReference>
<dbReference type="EMBL" id="U01037">
    <property type="protein sequence ID" value="AAA21849.1"/>
    <property type="molecule type" value="Genomic_DNA"/>
</dbReference>
<dbReference type="PIR" id="A53295">
    <property type="entry name" value="A53295"/>
</dbReference>
<dbReference type="RefSeq" id="WP_012820205.1">
    <property type="nucleotide sequence ID" value="NC_013410.1"/>
</dbReference>
<dbReference type="SMR" id="P35810"/>
<dbReference type="STRING" id="59374.FSU_0778"/>
<dbReference type="KEGG" id="fsc:FSU_0778"/>
<dbReference type="KEGG" id="fsu:Fisuc_0363"/>
<dbReference type="PATRIC" id="fig|59374.8.peg.753"/>
<dbReference type="eggNOG" id="COG0188">
    <property type="taxonomic scope" value="Bacteria"/>
</dbReference>
<dbReference type="HOGENOM" id="CLU_002977_6_1_0"/>
<dbReference type="OrthoDB" id="9806486at2"/>
<dbReference type="Proteomes" id="UP000000517">
    <property type="component" value="Chromosome"/>
</dbReference>
<dbReference type="GO" id="GO:0005694">
    <property type="term" value="C:chromosome"/>
    <property type="evidence" value="ECO:0007669"/>
    <property type="project" value="InterPro"/>
</dbReference>
<dbReference type="GO" id="GO:0005737">
    <property type="term" value="C:cytoplasm"/>
    <property type="evidence" value="ECO:0007669"/>
    <property type="project" value="UniProtKB-SubCell"/>
</dbReference>
<dbReference type="GO" id="GO:0009330">
    <property type="term" value="C:DNA topoisomerase type II (double strand cut, ATP-hydrolyzing) complex"/>
    <property type="evidence" value="ECO:0007669"/>
    <property type="project" value="TreeGrafter"/>
</dbReference>
<dbReference type="GO" id="GO:0005524">
    <property type="term" value="F:ATP binding"/>
    <property type="evidence" value="ECO:0007669"/>
    <property type="project" value="UniProtKB-UniRule"/>
</dbReference>
<dbReference type="GO" id="GO:0003677">
    <property type="term" value="F:DNA binding"/>
    <property type="evidence" value="ECO:0007669"/>
    <property type="project" value="UniProtKB-UniRule"/>
</dbReference>
<dbReference type="GO" id="GO:0034335">
    <property type="term" value="F:DNA negative supercoiling activity"/>
    <property type="evidence" value="ECO:0007669"/>
    <property type="project" value="UniProtKB-ARBA"/>
</dbReference>
<dbReference type="GO" id="GO:0006265">
    <property type="term" value="P:DNA topological change"/>
    <property type="evidence" value="ECO:0007669"/>
    <property type="project" value="UniProtKB-UniRule"/>
</dbReference>
<dbReference type="GO" id="GO:0006261">
    <property type="term" value="P:DNA-templated DNA replication"/>
    <property type="evidence" value="ECO:0007669"/>
    <property type="project" value="UniProtKB-UniRule"/>
</dbReference>
<dbReference type="CDD" id="cd00187">
    <property type="entry name" value="TOP4c"/>
    <property type="match status" value="1"/>
</dbReference>
<dbReference type="FunFam" id="1.10.268.10:FF:000001">
    <property type="entry name" value="DNA gyrase subunit A"/>
    <property type="match status" value="1"/>
</dbReference>
<dbReference type="FunFam" id="3.30.1360.40:FF:000002">
    <property type="entry name" value="DNA gyrase subunit A"/>
    <property type="match status" value="1"/>
</dbReference>
<dbReference type="Gene3D" id="3.30.1360.40">
    <property type="match status" value="1"/>
</dbReference>
<dbReference type="Gene3D" id="2.120.10.90">
    <property type="entry name" value="DNA gyrase/topoisomerase IV, subunit A, C-terminal"/>
    <property type="match status" value="1"/>
</dbReference>
<dbReference type="Gene3D" id="3.90.199.10">
    <property type="entry name" value="Topoisomerase II, domain 5"/>
    <property type="match status" value="1"/>
</dbReference>
<dbReference type="Gene3D" id="1.10.268.10">
    <property type="entry name" value="Topoisomerase, domain 3"/>
    <property type="match status" value="1"/>
</dbReference>
<dbReference type="HAMAP" id="MF_01897">
    <property type="entry name" value="GyrA"/>
    <property type="match status" value="1"/>
</dbReference>
<dbReference type="InterPro" id="IPR005743">
    <property type="entry name" value="GyrA"/>
</dbReference>
<dbReference type="InterPro" id="IPR006691">
    <property type="entry name" value="GyrA/parC_rep"/>
</dbReference>
<dbReference type="InterPro" id="IPR035516">
    <property type="entry name" value="Gyrase/topoIV_suA_C"/>
</dbReference>
<dbReference type="InterPro" id="IPR013760">
    <property type="entry name" value="Topo_IIA-like_dom_sf"/>
</dbReference>
<dbReference type="InterPro" id="IPR013758">
    <property type="entry name" value="Topo_IIA_A/C_ab"/>
</dbReference>
<dbReference type="InterPro" id="IPR013757">
    <property type="entry name" value="Topo_IIA_A_a_sf"/>
</dbReference>
<dbReference type="InterPro" id="IPR002205">
    <property type="entry name" value="Topo_IIA_dom_A"/>
</dbReference>
<dbReference type="InterPro" id="IPR050220">
    <property type="entry name" value="Type_II_DNA_Topoisomerases"/>
</dbReference>
<dbReference type="NCBIfam" id="TIGR01063">
    <property type="entry name" value="gyrA"/>
    <property type="match status" value="1"/>
</dbReference>
<dbReference type="NCBIfam" id="NF004043">
    <property type="entry name" value="PRK05560.1"/>
    <property type="match status" value="1"/>
</dbReference>
<dbReference type="NCBIfam" id="NF004044">
    <property type="entry name" value="PRK05561.1"/>
    <property type="match status" value="1"/>
</dbReference>
<dbReference type="PANTHER" id="PTHR43493:SF5">
    <property type="entry name" value="DNA GYRASE SUBUNIT A, CHLOROPLASTIC_MITOCHONDRIAL"/>
    <property type="match status" value="1"/>
</dbReference>
<dbReference type="PANTHER" id="PTHR43493">
    <property type="entry name" value="DNA GYRASE/TOPOISOMERASE SUBUNIT A"/>
    <property type="match status" value="1"/>
</dbReference>
<dbReference type="Pfam" id="PF03989">
    <property type="entry name" value="DNA_gyraseA_C"/>
    <property type="match status" value="6"/>
</dbReference>
<dbReference type="Pfam" id="PF00521">
    <property type="entry name" value="DNA_topoisoIV"/>
    <property type="match status" value="1"/>
</dbReference>
<dbReference type="SMART" id="SM00434">
    <property type="entry name" value="TOP4c"/>
    <property type="match status" value="1"/>
</dbReference>
<dbReference type="SUPFAM" id="SSF101904">
    <property type="entry name" value="GyrA/ParC C-terminal domain-like"/>
    <property type="match status" value="2"/>
</dbReference>
<dbReference type="SUPFAM" id="SSF56719">
    <property type="entry name" value="Type II DNA topoisomerase"/>
    <property type="match status" value="1"/>
</dbReference>
<dbReference type="PROSITE" id="PS52040">
    <property type="entry name" value="TOPO_IIA"/>
    <property type="match status" value="1"/>
</dbReference>
<proteinExistence type="inferred from homology"/>
<sequence>MSEEMVPGSQFKSLVEQDMQDCYLRYSMSVIVARALPDARDGFKPVHRRVMYSMHKLGVVPNKGTVKSARIVGDVIGKYHPHGDVAVYDTLARMAQDFSLRYPLVFGQGNFGSIDGDSPAAMRYTEAKMNNLGALMLEDLEKETVDMGPNYDESLEEPLVLPSALPNMIVNGTSGIAVGMATNMAPHNLREVGAAIHALAENPDLTGEDLMEYVKGPDFPTGAIVCGRSGIREAYLTGHGRVRVRARTEIETDAKGKPRIIVTEIPYMVNKAELCKKIADLVRDKRIDGITDIRDESSRDIRIVIELRRDAVGEVVLNNLFKYTQLQTTFSIYNLALVNNLPKLLTLKDLLQVYIDHRLDVITRATQFDLKKAAARLHIIEGLRIATQNIDEVVKIIRQSKTTEIAKQSLQDRFSLDEIQSQAIVDMRLAQLVGLNIEKLEAEYNELIATVADLKDILEKRERRVAIMLQKLDAVVDKYGDERRTTIGEAIDDSDDEDLIAEEEQVITLSKEGYIRRLPIDTFKAQNRGGKGIIGAGLKDEDNVEQIFTASTHSYLLVFTNKGRVYWTKVYRLPEGARNGKGRPIVNFVALTEGEKVQAIVPVRKFGGYFCLVFATKKGIINKMDLTLFSRPRKAGVNAISLDEDDELVKVQLVGMSAEEYEASKNASDDDSAEAVENAAEAQAAEAAIAEESESGDAEDFANRPIPKDLLMIATKNGQAVTFPISCFRAMGRGTHGVKGITLAEGDEVISLLWLKAGNKILTITEKGYGKRSEPGSYRVTRRGSKGVRNLNVTDKIGAAVFVESVADDYDLIITSKDGQVIRIKAADIRLTGRNAQGVKAITLRDGDVVKDATALPSVEDIEQDSADAKETFDKVKGVEVDDDSVVKDDAEKQEIGPTETEE</sequence>